<gene>
    <name evidence="1" type="primary">htpG</name>
    <name type="ordered locus">HSM_0751</name>
</gene>
<accession>B0USJ0</accession>
<organism>
    <name type="scientific">Histophilus somni (strain 2336)</name>
    <name type="common">Haemophilus somnus</name>
    <dbReference type="NCBI Taxonomy" id="228400"/>
    <lineage>
        <taxon>Bacteria</taxon>
        <taxon>Pseudomonadati</taxon>
        <taxon>Pseudomonadota</taxon>
        <taxon>Gammaproteobacteria</taxon>
        <taxon>Pasteurellales</taxon>
        <taxon>Pasteurellaceae</taxon>
        <taxon>Histophilus</taxon>
    </lineage>
</organism>
<protein>
    <recommendedName>
        <fullName evidence="1">Chaperone protein HtpG</fullName>
    </recommendedName>
    <alternativeName>
        <fullName evidence="1">Heat shock protein HtpG</fullName>
    </alternativeName>
    <alternativeName>
        <fullName evidence="1">High temperature protein G</fullName>
    </alternativeName>
</protein>
<comment type="function">
    <text evidence="1">Molecular chaperone. Has ATPase activity.</text>
</comment>
<comment type="subunit">
    <text evidence="1">Homodimer.</text>
</comment>
<comment type="subcellular location">
    <subcellularLocation>
        <location evidence="1">Cytoplasm</location>
    </subcellularLocation>
</comment>
<comment type="similarity">
    <text evidence="1">Belongs to the heat shock protein 90 family.</text>
</comment>
<dbReference type="EMBL" id="CP000947">
    <property type="protein sequence ID" value="ACA32420.1"/>
    <property type="molecule type" value="Genomic_DNA"/>
</dbReference>
<dbReference type="RefSeq" id="WP_012341577.1">
    <property type="nucleotide sequence ID" value="NC_010519.1"/>
</dbReference>
<dbReference type="SMR" id="B0USJ0"/>
<dbReference type="STRING" id="228400.HSM_0751"/>
<dbReference type="GeneID" id="31487037"/>
<dbReference type="KEGG" id="hsm:HSM_0751"/>
<dbReference type="HOGENOM" id="CLU_006684_3_0_6"/>
<dbReference type="GO" id="GO:0005737">
    <property type="term" value="C:cytoplasm"/>
    <property type="evidence" value="ECO:0007669"/>
    <property type="project" value="UniProtKB-SubCell"/>
</dbReference>
<dbReference type="GO" id="GO:0005524">
    <property type="term" value="F:ATP binding"/>
    <property type="evidence" value="ECO:0007669"/>
    <property type="project" value="UniProtKB-UniRule"/>
</dbReference>
<dbReference type="GO" id="GO:0016887">
    <property type="term" value="F:ATP hydrolysis activity"/>
    <property type="evidence" value="ECO:0007669"/>
    <property type="project" value="InterPro"/>
</dbReference>
<dbReference type="GO" id="GO:0140662">
    <property type="term" value="F:ATP-dependent protein folding chaperone"/>
    <property type="evidence" value="ECO:0007669"/>
    <property type="project" value="InterPro"/>
</dbReference>
<dbReference type="GO" id="GO:0051082">
    <property type="term" value="F:unfolded protein binding"/>
    <property type="evidence" value="ECO:0007669"/>
    <property type="project" value="UniProtKB-UniRule"/>
</dbReference>
<dbReference type="CDD" id="cd16927">
    <property type="entry name" value="HATPase_Hsp90-like"/>
    <property type="match status" value="1"/>
</dbReference>
<dbReference type="FunFam" id="1.20.120.790:FF:000002">
    <property type="entry name" value="Molecular chaperone HtpG"/>
    <property type="match status" value="1"/>
</dbReference>
<dbReference type="FunFam" id="3.30.230.80:FF:000002">
    <property type="entry name" value="Molecular chaperone HtpG"/>
    <property type="match status" value="1"/>
</dbReference>
<dbReference type="FunFam" id="3.30.565.10:FF:000009">
    <property type="entry name" value="Molecular chaperone HtpG"/>
    <property type="match status" value="1"/>
</dbReference>
<dbReference type="FunFam" id="3.40.50.11260:FF:000002">
    <property type="entry name" value="Molecular chaperone HtpG"/>
    <property type="match status" value="1"/>
</dbReference>
<dbReference type="Gene3D" id="3.30.230.80">
    <property type="match status" value="1"/>
</dbReference>
<dbReference type="Gene3D" id="3.40.50.11260">
    <property type="match status" value="1"/>
</dbReference>
<dbReference type="Gene3D" id="1.20.120.790">
    <property type="entry name" value="Heat shock protein 90, C-terminal domain"/>
    <property type="match status" value="1"/>
</dbReference>
<dbReference type="Gene3D" id="3.30.565.10">
    <property type="entry name" value="Histidine kinase-like ATPase, C-terminal domain"/>
    <property type="match status" value="1"/>
</dbReference>
<dbReference type="HAMAP" id="MF_00505">
    <property type="entry name" value="HSP90"/>
    <property type="match status" value="1"/>
</dbReference>
<dbReference type="InterPro" id="IPR036890">
    <property type="entry name" value="HATPase_C_sf"/>
</dbReference>
<dbReference type="InterPro" id="IPR019805">
    <property type="entry name" value="Heat_shock_protein_90_CS"/>
</dbReference>
<dbReference type="InterPro" id="IPR037196">
    <property type="entry name" value="HSP90_C"/>
</dbReference>
<dbReference type="InterPro" id="IPR001404">
    <property type="entry name" value="Hsp90_fam"/>
</dbReference>
<dbReference type="InterPro" id="IPR020575">
    <property type="entry name" value="Hsp90_N"/>
</dbReference>
<dbReference type="InterPro" id="IPR020568">
    <property type="entry name" value="Ribosomal_Su5_D2-typ_SF"/>
</dbReference>
<dbReference type="NCBIfam" id="NF003555">
    <property type="entry name" value="PRK05218.1"/>
    <property type="match status" value="1"/>
</dbReference>
<dbReference type="PANTHER" id="PTHR11528">
    <property type="entry name" value="HEAT SHOCK PROTEIN 90 FAMILY MEMBER"/>
    <property type="match status" value="1"/>
</dbReference>
<dbReference type="Pfam" id="PF13589">
    <property type="entry name" value="HATPase_c_3"/>
    <property type="match status" value="1"/>
</dbReference>
<dbReference type="Pfam" id="PF00183">
    <property type="entry name" value="HSP90"/>
    <property type="match status" value="1"/>
</dbReference>
<dbReference type="PIRSF" id="PIRSF002583">
    <property type="entry name" value="Hsp90"/>
    <property type="match status" value="1"/>
</dbReference>
<dbReference type="PRINTS" id="PR00775">
    <property type="entry name" value="HEATSHOCK90"/>
</dbReference>
<dbReference type="SMART" id="SM00387">
    <property type="entry name" value="HATPase_c"/>
    <property type="match status" value="1"/>
</dbReference>
<dbReference type="SUPFAM" id="SSF55874">
    <property type="entry name" value="ATPase domain of HSP90 chaperone/DNA topoisomerase II/histidine kinase"/>
    <property type="match status" value="1"/>
</dbReference>
<dbReference type="SUPFAM" id="SSF110942">
    <property type="entry name" value="HSP90 C-terminal domain"/>
    <property type="match status" value="1"/>
</dbReference>
<dbReference type="SUPFAM" id="SSF54211">
    <property type="entry name" value="Ribosomal protein S5 domain 2-like"/>
    <property type="match status" value="1"/>
</dbReference>
<dbReference type="PROSITE" id="PS00298">
    <property type="entry name" value="HSP90"/>
    <property type="match status" value="1"/>
</dbReference>
<sequence>MSTNQETRGFQSEVKQLLQLMIHSLYSNKEIFLRELISNASDAADKLRFKALSAPELYEGDGDLKVRISFDAEKGTLTISDNGIGMTREQVIDHLGTIAKSGTKEFLAALGQEQAKDSQLIGQFGVGFYSAFIVADKVTVKTRAAGEPIDRAVLWESAGEGEYSVADIEKRERGTEITLHLREEEKEFANEWRVREIIGKYSDHIGLPVEILAKEYDEEGKETGIKWEKINKAQALWTRSKGEISDEEYKEFYKHLSHDFADPLLWTHNKVEGNQEYTSLLYVPSKAPWDLFNREHKHGLKLYVQRVFIMDDAEQFMPNYLRFMRGLIDSNDLPLNVSREILQDNKVTAALRKALTKRSLQMLEKLAKDDEEKYLQFWKEFGLVLKEGPSEDFANKENIAKLLRFASSKNDSSEQTVSLEDYVARMKEGQKAIYYITADSYIAAKNSPHLELFNKKDIEVLLLSDRIDEWMLSYLTEFDGKQLQPITKADLDLGDLADKEQEEQKEQDKTFSSFIERVKTLLGERVKDVRLTHRLTDTPAVVSTDNDQMTTQMAKLFAAAGQPVPEVKYTFELNPEHHLVKKVADFADEDEFANWIELLLEQAMLAERGSLENPTAFIKRVNNLLG</sequence>
<evidence type="ECO:0000255" key="1">
    <source>
        <dbReference type="HAMAP-Rule" id="MF_00505"/>
    </source>
</evidence>
<reference key="1">
    <citation type="submission" date="2008-02" db="EMBL/GenBank/DDBJ databases">
        <title>Complete sequence of Haemophilus somnus 2336.</title>
        <authorList>
            <consortium name="US DOE Joint Genome Institute"/>
            <person name="Siddaramappa S."/>
            <person name="Duncan A.J."/>
            <person name="Challacombe J.F."/>
            <person name="Rainey D."/>
            <person name="Gillaspy A.F."/>
            <person name="Carson M."/>
            <person name="Gipson J."/>
            <person name="Gipson M."/>
            <person name="Bruce D."/>
            <person name="Detter J.C."/>
            <person name="Han C.S."/>
            <person name="Land M."/>
            <person name="Tapia R."/>
            <person name="Thompson L.S."/>
            <person name="Orvis J."/>
            <person name="Zaitshik J."/>
            <person name="Barnes G."/>
            <person name="Brettin T.S."/>
            <person name="Dyer D.W."/>
            <person name="Inzana T.J."/>
        </authorList>
    </citation>
    <scope>NUCLEOTIDE SEQUENCE [LARGE SCALE GENOMIC DNA]</scope>
    <source>
        <strain>2336</strain>
    </source>
</reference>
<name>HTPG_HISS2</name>
<keyword id="KW-0067">ATP-binding</keyword>
<keyword id="KW-0143">Chaperone</keyword>
<keyword id="KW-0963">Cytoplasm</keyword>
<keyword id="KW-0547">Nucleotide-binding</keyword>
<keyword id="KW-0346">Stress response</keyword>
<feature type="chain" id="PRO_1000081518" description="Chaperone protein HtpG">
    <location>
        <begin position="1"/>
        <end position="626"/>
    </location>
</feature>
<feature type="region of interest" description="A; substrate-binding" evidence="1">
    <location>
        <begin position="1"/>
        <end position="339"/>
    </location>
</feature>
<feature type="region of interest" description="B" evidence="1">
    <location>
        <begin position="340"/>
        <end position="555"/>
    </location>
</feature>
<feature type="region of interest" description="C" evidence="1">
    <location>
        <begin position="556"/>
        <end position="626"/>
    </location>
</feature>
<proteinExistence type="inferred from homology"/>